<organism>
    <name type="scientific">Mycobacterium tuberculosis (strain ATCC 25618 / H37Rv)</name>
    <dbReference type="NCBI Taxonomy" id="83332"/>
    <lineage>
        <taxon>Bacteria</taxon>
        <taxon>Bacillati</taxon>
        <taxon>Actinomycetota</taxon>
        <taxon>Actinomycetes</taxon>
        <taxon>Mycobacteriales</taxon>
        <taxon>Mycobacteriaceae</taxon>
        <taxon>Mycobacterium</taxon>
        <taxon>Mycobacterium tuberculosis complex</taxon>
    </lineage>
</organism>
<keyword id="KW-0963">Cytoplasm</keyword>
<keyword id="KW-0903">Direct protein sequencing</keyword>
<keyword id="KW-1185">Reference proteome</keyword>
<keyword id="KW-0810">Translation regulation</keyword>
<dbReference type="EMBL" id="AL123456">
    <property type="protein sequence ID" value="CCP46060.1"/>
    <property type="status" value="ALT_INIT"/>
    <property type="molecule type" value="Genomic_DNA"/>
</dbReference>
<dbReference type="RefSeq" id="NP_217758.3">
    <property type="nucleotide sequence ID" value="NC_000962.3"/>
</dbReference>
<dbReference type="SMR" id="O05886"/>
<dbReference type="FunCoup" id="O05886">
    <property type="interactions" value="137"/>
</dbReference>
<dbReference type="STRING" id="83332.Rv3241c"/>
<dbReference type="PaxDb" id="83332-Rv3241c"/>
<dbReference type="DNASU" id="888849"/>
<dbReference type="GeneID" id="888849"/>
<dbReference type="KEGG" id="mtu:Rv3241c"/>
<dbReference type="PATRIC" id="fig|83332.12.peg.3624"/>
<dbReference type="TubercuList" id="Rv3241c"/>
<dbReference type="eggNOG" id="COG1544">
    <property type="taxonomic scope" value="Bacteria"/>
</dbReference>
<dbReference type="InParanoid" id="O05886"/>
<dbReference type="OrthoDB" id="9794975at2"/>
<dbReference type="Proteomes" id="UP000001584">
    <property type="component" value="Chromosome"/>
</dbReference>
<dbReference type="GO" id="GO:0022627">
    <property type="term" value="C:cytosolic small ribosomal subunit"/>
    <property type="evidence" value="ECO:0000318"/>
    <property type="project" value="GO_Central"/>
</dbReference>
<dbReference type="GO" id="GO:0043024">
    <property type="term" value="F:ribosomal small subunit binding"/>
    <property type="evidence" value="ECO:0000318"/>
    <property type="project" value="GO_Central"/>
</dbReference>
<dbReference type="GO" id="GO:0045900">
    <property type="term" value="P:negative regulation of translational elongation"/>
    <property type="evidence" value="ECO:0000318"/>
    <property type="project" value="GO_Central"/>
</dbReference>
<dbReference type="CDD" id="cd00552">
    <property type="entry name" value="RaiA"/>
    <property type="match status" value="1"/>
</dbReference>
<dbReference type="FunFam" id="3.30.160.100:FF:000004">
    <property type="entry name" value="Ribosome hibernation promoting factor"/>
    <property type="match status" value="1"/>
</dbReference>
<dbReference type="FunFam" id="3.30.505.50:FF:000002">
    <property type="entry name" value="Ribosome hibernation promoting factor"/>
    <property type="match status" value="1"/>
</dbReference>
<dbReference type="Gene3D" id="3.30.160.100">
    <property type="entry name" value="Ribosome hibernation promotion factor-like"/>
    <property type="match status" value="1"/>
</dbReference>
<dbReference type="Gene3D" id="3.30.505.50">
    <property type="entry name" value="Sigma 54 modulation/S30EA ribosomal protein, C-terminal domain"/>
    <property type="match status" value="1"/>
</dbReference>
<dbReference type="HAMAP" id="MF_00839">
    <property type="entry name" value="HPF"/>
    <property type="match status" value="1"/>
</dbReference>
<dbReference type="InterPro" id="IPR050574">
    <property type="entry name" value="HPF/YfiA_ribosome-assoc"/>
</dbReference>
<dbReference type="InterPro" id="IPR034694">
    <property type="entry name" value="HPF_long/plastid"/>
</dbReference>
<dbReference type="InterPro" id="IPR036567">
    <property type="entry name" value="RHF-like"/>
</dbReference>
<dbReference type="InterPro" id="IPR003489">
    <property type="entry name" value="RHF/RaiA"/>
</dbReference>
<dbReference type="InterPro" id="IPR032528">
    <property type="entry name" value="Ribosom_S30AE_C"/>
</dbReference>
<dbReference type="InterPro" id="IPR038416">
    <property type="entry name" value="Ribosom_S30AE_C_sf"/>
</dbReference>
<dbReference type="NCBIfam" id="TIGR00741">
    <property type="entry name" value="yfiA"/>
    <property type="match status" value="1"/>
</dbReference>
<dbReference type="PANTHER" id="PTHR33231">
    <property type="entry name" value="30S RIBOSOMAL PROTEIN"/>
    <property type="match status" value="1"/>
</dbReference>
<dbReference type="PANTHER" id="PTHR33231:SF1">
    <property type="entry name" value="30S RIBOSOMAL PROTEIN"/>
    <property type="match status" value="1"/>
</dbReference>
<dbReference type="Pfam" id="PF16321">
    <property type="entry name" value="Ribosom_S30AE_C"/>
    <property type="match status" value="1"/>
</dbReference>
<dbReference type="Pfam" id="PF02482">
    <property type="entry name" value="Ribosomal_S30AE"/>
    <property type="match status" value="1"/>
</dbReference>
<dbReference type="SUPFAM" id="SSF69754">
    <property type="entry name" value="Ribosome binding protein Y (YfiA homologue)"/>
    <property type="match status" value="1"/>
</dbReference>
<proteinExistence type="evidence at protein level"/>
<reference key="1">
    <citation type="journal article" date="1998" name="Nature">
        <title>Deciphering the biology of Mycobacterium tuberculosis from the complete genome sequence.</title>
        <authorList>
            <person name="Cole S.T."/>
            <person name="Brosch R."/>
            <person name="Parkhill J."/>
            <person name="Garnier T."/>
            <person name="Churcher C.M."/>
            <person name="Harris D.E."/>
            <person name="Gordon S.V."/>
            <person name="Eiglmeier K."/>
            <person name="Gas S."/>
            <person name="Barry C.E. III"/>
            <person name="Tekaia F."/>
            <person name="Badcock K."/>
            <person name="Basham D."/>
            <person name="Brown D."/>
            <person name="Chillingworth T."/>
            <person name="Connor R."/>
            <person name="Davies R.M."/>
            <person name="Devlin K."/>
            <person name="Feltwell T."/>
            <person name="Gentles S."/>
            <person name="Hamlin N."/>
            <person name="Holroyd S."/>
            <person name="Hornsby T."/>
            <person name="Jagels K."/>
            <person name="Krogh A."/>
            <person name="McLean J."/>
            <person name="Moule S."/>
            <person name="Murphy L.D."/>
            <person name="Oliver S."/>
            <person name="Osborne J."/>
            <person name="Quail M.A."/>
            <person name="Rajandream M.A."/>
            <person name="Rogers J."/>
            <person name="Rutter S."/>
            <person name="Seeger K."/>
            <person name="Skelton S."/>
            <person name="Squares S."/>
            <person name="Squares R."/>
            <person name="Sulston J.E."/>
            <person name="Taylor K."/>
            <person name="Whitehead S."/>
            <person name="Barrell B.G."/>
        </authorList>
    </citation>
    <scope>NUCLEOTIDE SEQUENCE [LARGE SCALE GENOMIC DNA]</scope>
    <source>
        <strain>ATCC 25618 / H37Rv</strain>
    </source>
</reference>
<reference key="2">
    <citation type="journal article" date="2022" name="Genomics">
        <title>Deep N-terminomics of Mycobacterium tuberculosis H37Rv extensively correct annotated encoding genes.</title>
        <authorList>
            <person name="Shi J."/>
            <person name="Meng S."/>
            <person name="Wan L."/>
            <person name="Zhang Z."/>
            <person name="Jiang S."/>
            <person name="Zhu H."/>
            <person name="Dai E."/>
            <person name="Chang L."/>
            <person name="Gao H."/>
            <person name="Wan K."/>
            <person name="Zhang L."/>
            <person name="Zhao X."/>
            <person name="Liu H."/>
            <person name="Lyu Z."/>
            <person name="Zhang Y."/>
            <person name="Xu P."/>
        </authorList>
    </citation>
    <scope>PROTEIN SEQUENCE OF 4-16</scope>
    <scope>SEQUENCE REVISION TO N-TERMINUS</scope>
    <source>
        <strain>H37Rv</strain>
    </source>
</reference>
<reference key="3">
    <citation type="journal article" date="2011" name="Mol. Cell. Proteomics">
        <title>Proteogenomic analysis of Mycobacterium tuberculosis by high resolution mass spectrometry.</title>
        <authorList>
            <person name="Kelkar D.S."/>
            <person name="Kumar D."/>
            <person name="Kumar P."/>
            <person name="Balakrishnan L."/>
            <person name="Muthusamy B."/>
            <person name="Yadav A.K."/>
            <person name="Shrivastava P."/>
            <person name="Marimuthu A."/>
            <person name="Anand S."/>
            <person name="Sundaram H."/>
            <person name="Kingsbury R."/>
            <person name="Harsha H.C."/>
            <person name="Nair B."/>
            <person name="Prasad T.S."/>
            <person name="Chauhan D.S."/>
            <person name="Katoch K."/>
            <person name="Katoch V.M."/>
            <person name="Kumar P."/>
            <person name="Chaerkady R."/>
            <person name="Ramachandran S."/>
            <person name="Dash D."/>
            <person name="Pandey A."/>
        </authorList>
    </citation>
    <scope>IDENTIFICATION BY MASS SPECTROMETRY [LARGE SCALE ANALYSIS]</scope>
    <source>
        <strain>ATCC 25618 / H37Rv</strain>
    </source>
</reference>
<accession>O05886</accession>
<accession>F2GKB7</accession>
<accession>I6X6S6</accession>
<accession>L0TER5</accession>
<evidence type="ECO:0000255" key="1">
    <source>
        <dbReference type="HAMAP-Rule" id="MF_00839"/>
    </source>
</evidence>
<evidence type="ECO:0000269" key="2">
    <source>
    </source>
</evidence>
<comment type="function">
    <text evidence="1">Required for dimerization of active 70S ribosomes into 100S ribosomes in stationary phase; 100S ribosomes are translationally inactive and sometimes present during exponential growth.</text>
</comment>
<comment type="subunit">
    <text evidence="1">Interacts with 100S ribosomes.</text>
</comment>
<comment type="subcellular location">
    <subcellularLocation>
        <location evidence="1">Cytoplasm</location>
    </subcellularLocation>
</comment>
<comment type="similarity">
    <text evidence="1">Belongs to the HPF/YfiA ribosome-associated protein family. Long HPF subfamily.</text>
</comment>
<comment type="sequence caution" evidence="2">
    <conflict type="erroneous initiation">
        <sequence resource="EMBL-CDS" id="CCP46060"/>
    </conflict>
    <text>Truncated N-terminus.</text>
</comment>
<sequence>MSRLAVDSGQVLAEPKSNAEIVFKGRNVEIPDHFRIYVSQKLARLERFDRTIYLFDVELDHERNRRQRKSCQRVEITARGRGPVVRGEACADSFYAALESAVVKLESRLRRGKDRRKVHYGDKTPVSLAEATAVVPAPENGFNTRPAEAHDHDGAVVEREPGRIVRTKEHPAKPMSVDDALYQMELVGHDFFLFYDKDTERPSVVYRRHAYDYGLIRLA</sequence>
<feature type="chain" id="PRO_0000436446" description="Ribosome hibernation promotion factor">
    <location>
        <begin position="1"/>
        <end position="219"/>
    </location>
</feature>
<gene>
    <name evidence="1" type="primary">hpf</name>
    <name type="ordered locus">Rv3241c</name>
</gene>
<protein>
    <recommendedName>
        <fullName evidence="1">Ribosome hibernation promotion factor</fullName>
        <shortName evidence="1">HPF</shortName>
    </recommendedName>
</protein>
<name>HPF_MYCTU</name>